<keyword id="KW-0597">Phosphoprotein</keyword>
<keyword id="KW-1185">Reference proteome</keyword>
<organism>
    <name type="scientific">Rattus norvegicus</name>
    <name type="common">Rat</name>
    <dbReference type="NCBI Taxonomy" id="10116"/>
    <lineage>
        <taxon>Eukaryota</taxon>
        <taxon>Metazoa</taxon>
        <taxon>Chordata</taxon>
        <taxon>Craniata</taxon>
        <taxon>Vertebrata</taxon>
        <taxon>Euteleostomi</taxon>
        <taxon>Mammalia</taxon>
        <taxon>Eutheria</taxon>
        <taxon>Euarchontoglires</taxon>
        <taxon>Glires</taxon>
        <taxon>Rodentia</taxon>
        <taxon>Myomorpha</taxon>
        <taxon>Muroidea</taxon>
        <taxon>Muridae</taxon>
        <taxon>Murinae</taxon>
        <taxon>Rattus</taxon>
    </lineage>
</organism>
<evidence type="ECO:0000256" key="1">
    <source>
        <dbReference type="SAM" id="MobiDB-lite"/>
    </source>
</evidence>
<evidence type="ECO:0007744" key="2">
    <source>
    </source>
</evidence>
<feature type="chain" id="PRO_0000274243" description="Uncharacterized protein C10orf62 homolog">
    <location>
        <begin position="1"/>
        <end position="305"/>
    </location>
</feature>
<feature type="region of interest" description="Disordered" evidence="1">
    <location>
        <begin position="1"/>
        <end position="30"/>
    </location>
</feature>
<feature type="region of interest" description="Disordered" evidence="1">
    <location>
        <begin position="92"/>
        <end position="114"/>
    </location>
</feature>
<feature type="region of interest" description="Disordered" evidence="1">
    <location>
        <begin position="197"/>
        <end position="305"/>
    </location>
</feature>
<feature type="compositionally biased region" description="Basic residues" evidence="1">
    <location>
        <begin position="1"/>
        <end position="10"/>
    </location>
</feature>
<feature type="compositionally biased region" description="Basic and acidic residues" evidence="1">
    <location>
        <begin position="16"/>
        <end position="27"/>
    </location>
</feature>
<feature type="compositionally biased region" description="Polar residues" evidence="1">
    <location>
        <begin position="92"/>
        <end position="101"/>
    </location>
</feature>
<feature type="compositionally biased region" description="Low complexity" evidence="1">
    <location>
        <begin position="197"/>
        <end position="208"/>
    </location>
</feature>
<feature type="compositionally biased region" description="Polar residues" evidence="1">
    <location>
        <begin position="209"/>
        <end position="221"/>
    </location>
</feature>
<feature type="compositionally biased region" description="Polar residues" evidence="1">
    <location>
        <begin position="231"/>
        <end position="244"/>
    </location>
</feature>
<feature type="compositionally biased region" description="Low complexity" evidence="1">
    <location>
        <begin position="247"/>
        <end position="293"/>
    </location>
</feature>
<feature type="compositionally biased region" description="Polar residues" evidence="1">
    <location>
        <begin position="294"/>
        <end position="305"/>
    </location>
</feature>
<feature type="modified residue" description="Phosphoserine" evidence="2">
    <location>
        <position position="39"/>
    </location>
</feature>
<feature type="modified residue" description="Phosphoserine" evidence="2">
    <location>
        <position position="158"/>
    </location>
</feature>
<accession>Q6AYN3</accession>
<dbReference type="EMBL" id="BC078978">
    <property type="protein sequence ID" value="AAH78978.1"/>
    <property type="molecule type" value="mRNA"/>
</dbReference>
<dbReference type="RefSeq" id="NP_001037746.1">
    <property type="nucleotide sequence ID" value="NM_001044281.1"/>
</dbReference>
<dbReference type="FunCoup" id="Q6AYN3">
    <property type="interactions" value="5"/>
</dbReference>
<dbReference type="iPTMnet" id="Q6AYN3"/>
<dbReference type="PhosphoSitePlus" id="Q6AYN3"/>
<dbReference type="Ensembl" id="ENSRNOT00000108325.1">
    <property type="protein sequence ID" value="ENSRNOP00000083911.1"/>
    <property type="gene ID" value="ENSRNOG00000069762.1"/>
</dbReference>
<dbReference type="GeneID" id="682010"/>
<dbReference type="KEGG" id="rno:682010"/>
<dbReference type="UCSC" id="RGD:1588156">
    <property type="organism name" value="rat"/>
</dbReference>
<dbReference type="AGR" id="RGD:1588156"/>
<dbReference type="CTD" id="682010"/>
<dbReference type="RGD" id="1588156">
    <property type="gene designation" value="MGC93861"/>
</dbReference>
<dbReference type="GeneTree" id="ENSGT00390000015820"/>
<dbReference type="InParanoid" id="Q6AYN3"/>
<dbReference type="OMA" id="AKNENWI"/>
<dbReference type="OrthoDB" id="9450232at2759"/>
<dbReference type="PhylomeDB" id="Q6AYN3"/>
<dbReference type="PRO" id="PR:Q6AYN3"/>
<dbReference type="Proteomes" id="UP000002494">
    <property type="component" value="Chromosome 1"/>
</dbReference>
<dbReference type="InterPro" id="IPR037649">
    <property type="entry name" value="C10orf62"/>
</dbReference>
<dbReference type="PANTHER" id="PTHR23008:SF0">
    <property type="entry name" value="CHROMOSOME 10 OPEN READING FRAME 62"/>
    <property type="match status" value="1"/>
</dbReference>
<dbReference type="PANTHER" id="PTHR23008">
    <property type="entry name" value="CHROMOSOME 28 C10ORF62 HOMOLOG"/>
    <property type="match status" value="1"/>
</dbReference>
<dbReference type="Pfam" id="PF17729">
    <property type="entry name" value="DUF5569"/>
    <property type="match status" value="1"/>
</dbReference>
<proteinExistence type="evidence at protein level"/>
<protein>
    <recommendedName>
        <fullName>Uncharacterized protein C10orf62 homolog</fullName>
    </recommendedName>
</protein>
<sequence>MLWAQRKKRKATTETTEDKPAESHRPNDSWIKSHFSRLSEEKLPAYRRVSSCGYSPEGKHGEANTTLHVDTVTTKHGEGGVALHRDSFASKQKISGTSVSKEMQRESGKSPSMENDTWAAVAACTKEIDAKGHHVANSVLQRSPEYHRTGHAESRNISPEDLKALEEVELKLKGNFLTHRETVVAGANQAHTVYNQSHHGNQSHQNHNTYPCHQNNQSRSVHYQGHHPSHLSHQGYPSYSSHQNHPGHPSQQGHSSHSNQQGHLGLSSQQGHPSQSSHQSHQGQPGHPNHQSHSLVNRRNQIYDS</sequence>
<reference key="1">
    <citation type="journal article" date="2004" name="Genome Res.">
        <title>The status, quality, and expansion of the NIH full-length cDNA project: the Mammalian Gene Collection (MGC).</title>
        <authorList>
            <consortium name="The MGC Project Team"/>
        </authorList>
    </citation>
    <scope>NUCLEOTIDE SEQUENCE [LARGE SCALE MRNA]</scope>
    <source>
        <tissue>Testis</tissue>
    </source>
</reference>
<reference key="2">
    <citation type="journal article" date="2012" name="Nat. Commun.">
        <title>Quantitative maps of protein phosphorylation sites across 14 different rat organs and tissues.</title>
        <authorList>
            <person name="Lundby A."/>
            <person name="Secher A."/>
            <person name="Lage K."/>
            <person name="Nordsborg N.B."/>
            <person name="Dmytriyev A."/>
            <person name="Lundby C."/>
            <person name="Olsen J.V."/>
        </authorList>
    </citation>
    <scope>PHOSPHORYLATION [LARGE SCALE ANALYSIS] AT SER-39 AND SER-158</scope>
    <scope>IDENTIFICATION BY MASS SPECTROMETRY [LARGE SCALE ANALYSIS]</scope>
</reference>
<name>CJ062_RAT</name>